<organism>
    <name type="scientific">Actinobacillus pleuropneumoniae serotype 5b (strain L20)</name>
    <dbReference type="NCBI Taxonomy" id="416269"/>
    <lineage>
        <taxon>Bacteria</taxon>
        <taxon>Pseudomonadati</taxon>
        <taxon>Pseudomonadota</taxon>
        <taxon>Gammaproteobacteria</taxon>
        <taxon>Pasteurellales</taxon>
        <taxon>Pasteurellaceae</taxon>
        <taxon>Actinobacillus</taxon>
    </lineage>
</organism>
<proteinExistence type="inferred from homology"/>
<feature type="chain" id="PRO_1000049381" description="Lipid-A-disaccharide synthase">
    <location>
        <begin position="1"/>
        <end position="393"/>
    </location>
</feature>
<sequence length="393" mass="43749">MMTKEAPLIALVAGEISGDILGAGLINALKLHYPNARFIGVAGPRMIQAGCETLFDMEELAVMGLAEVVKHLPRLLKRRKQVIETMLAEKPDIFIGIDAPDFNLTVEEKLKASGIKTIHYVSPSVWAWRQNRVHKIARATNLVLAFLPFEKAFYDRFNVPCRFIGHTMADTIALKPNRAEACVGLNLDEAQRYLAILVGSRASEVGFLAEPFLKAAQILKQQYPDLQFLVPLVNDKRIAQFEQIKAQVAPELSVHILKGNARQAMIAAEASLLASGTAALEGMLCKSPMVVGYKMKAMTYWLAKRLVKTKYISLPNLLADEMLVPELIQDECNPENLAWYLGNYLADDADHRKQRNELKQRFTELHKLIQCDADAQAAQAVVDVLEANTSDQN</sequence>
<gene>
    <name evidence="1" type="primary">lpxB</name>
    <name type="ordered locus">APL_0007</name>
</gene>
<keyword id="KW-0328">Glycosyltransferase</keyword>
<keyword id="KW-0441">Lipid A biosynthesis</keyword>
<keyword id="KW-0444">Lipid biosynthesis</keyword>
<keyword id="KW-0443">Lipid metabolism</keyword>
<keyword id="KW-1185">Reference proteome</keyword>
<keyword id="KW-0808">Transferase</keyword>
<reference key="1">
    <citation type="journal article" date="2008" name="J. Bacteriol.">
        <title>The complete genome sequence of Actinobacillus pleuropneumoniae L20 (serotype 5b).</title>
        <authorList>
            <person name="Foote S.J."/>
            <person name="Bosse J.T."/>
            <person name="Bouevitch A.B."/>
            <person name="Langford P.R."/>
            <person name="Young N.M."/>
            <person name="Nash J.H.E."/>
        </authorList>
    </citation>
    <scope>NUCLEOTIDE SEQUENCE [LARGE SCALE GENOMIC DNA]</scope>
    <source>
        <strain>L20</strain>
    </source>
</reference>
<comment type="function">
    <text evidence="1">Condensation of UDP-2,3-diacylglucosamine and 2,3-diacylglucosamine-1-phosphate to form lipid A disaccharide, a precursor of lipid A, a phosphorylated glycolipid that anchors the lipopolysaccharide to the outer membrane of the cell.</text>
</comment>
<comment type="catalytic activity">
    <reaction evidence="1">
        <text>a lipid X + a UDP-2-N,3-O-bis[(3R)-3-hydroxyacyl]-alpha-D-glucosamine = a lipid A disaccharide + UDP + H(+)</text>
        <dbReference type="Rhea" id="RHEA:67828"/>
        <dbReference type="ChEBI" id="CHEBI:15378"/>
        <dbReference type="ChEBI" id="CHEBI:58223"/>
        <dbReference type="ChEBI" id="CHEBI:137748"/>
        <dbReference type="ChEBI" id="CHEBI:176338"/>
        <dbReference type="ChEBI" id="CHEBI:176343"/>
        <dbReference type="EC" id="2.4.1.182"/>
    </reaction>
</comment>
<comment type="pathway">
    <text evidence="1">Bacterial outer membrane biogenesis; LPS lipid A biosynthesis.</text>
</comment>
<comment type="similarity">
    <text evidence="1">Belongs to the LpxB family.</text>
</comment>
<name>LPXB_ACTP2</name>
<protein>
    <recommendedName>
        <fullName evidence="1">Lipid-A-disaccharide synthase</fullName>
        <ecNumber evidence="1">2.4.1.182</ecNumber>
    </recommendedName>
</protein>
<dbReference type="EC" id="2.4.1.182" evidence="1"/>
<dbReference type="EMBL" id="CP000569">
    <property type="protein sequence ID" value="ABN73115.1"/>
    <property type="molecule type" value="Genomic_DNA"/>
</dbReference>
<dbReference type="RefSeq" id="WP_009874745.1">
    <property type="nucleotide sequence ID" value="NC_009053.1"/>
</dbReference>
<dbReference type="SMR" id="A3MY79"/>
<dbReference type="STRING" id="416269.APL_0007"/>
<dbReference type="CAZy" id="GT19">
    <property type="family name" value="Glycosyltransferase Family 19"/>
</dbReference>
<dbReference type="EnsemblBacteria" id="ABN73115">
    <property type="protein sequence ID" value="ABN73115"/>
    <property type="gene ID" value="APL_0007"/>
</dbReference>
<dbReference type="KEGG" id="apl:APL_0007"/>
<dbReference type="eggNOG" id="COG0763">
    <property type="taxonomic scope" value="Bacteria"/>
</dbReference>
<dbReference type="HOGENOM" id="CLU_036577_3_0_6"/>
<dbReference type="UniPathway" id="UPA00973"/>
<dbReference type="Proteomes" id="UP000001432">
    <property type="component" value="Chromosome"/>
</dbReference>
<dbReference type="GO" id="GO:0016020">
    <property type="term" value="C:membrane"/>
    <property type="evidence" value="ECO:0007669"/>
    <property type="project" value="GOC"/>
</dbReference>
<dbReference type="GO" id="GO:0008915">
    <property type="term" value="F:lipid-A-disaccharide synthase activity"/>
    <property type="evidence" value="ECO:0007669"/>
    <property type="project" value="UniProtKB-UniRule"/>
</dbReference>
<dbReference type="GO" id="GO:0005543">
    <property type="term" value="F:phospholipid binding"/>
    <property type="evidence" value="ECO:0007669"/>
    <property type="project" value="TreeGrafter"/>
</dbReference>
<dbReference type="GO" id="GO:0009245">
    <property type="term" value="P:lipid A biosynthetic process"/>
    <property type="evidence" value="ECO:0007669"/>
    <property type="project" value="UniProtKB-UniRule"/>
</dbReference>
<dbReference type="CDD" id="cd01635">
    <property type="entry name" value="Glycosyltransferase_GTB-type"/>
    <property type="match status" value="1"/>
</dbReference>
<dbReference type="HAMAP" id="MF_00392">
    <property type="entry name" value="LpxB"/>
    <property type="match status" value="1"/>
</dbReference>
<dbReference type="InterPro" id="IPR003835">
    <property type="entry name" value="Glyco_trans_19"/>
</dbReference>
<dbReference type="NCBIfam" id="TIGR00215">
    <property type="entry name" value="lpxB"/>
    <property type="match status" value="1"/>
</dbReference>
<dbReference type="PANTHER" id="PTHR30372">
    <property type="entry name" value="LIPID-A-DISACCHARIDE SYNTHASE"/>
    <property type="match status" value="1"/>
</dbReference>
<dbReference type="PANTHER" id="PTHR30372:SF4">
    <property type="entry name" value="LIPID-A-DISACCHARIDE SYNTHASE, MITOCHONDRIAL-RELATED"/>
    <property type="match status" value="1"/>
</dbReference>
<dbReference type="Pfam" id="PF02684">
    <property type="entry name" value="LpxB"/>
    <property type="match status" value="1"/>
</dbReference>
<dbReference type="SUPFAM" id="SSF53756">
    <property type="entry name" value="UDP-Glycosyltransferase/glycogen phosphorylase"/>
    <property type="match status" value="1"/>
</dbReference>
<accession>A3MY79</accession>
<evidence type="ECO:0000255" key="1">
    <source>
        <dbReference type="HAMAP-Rule" id="MF_00392"/>
    </source>
</evidence>